<keyword id="KW-1185">Reference proteome</keyword>
<sequence>MSPSTPTDPCPCGRAAGYAQCCGQYHAGAAAPDAETLMRARYSAYVRRNVDYLLASWHPSTRPAELALDEGGRTTWLGLNVQRAIATGADTAEVVFLARYRIGGGSAVRMTEHSRFVREDGHWYYLDAR</sequence>
<accession>Q8P3B7</accession>
<proteinExistence type="inferred from homology"/>
<feature type="chain" id="PRO_0000071823" description="UPF0225 protein XCC4159">
    <location>
        <begin position="1"/>
        <end position="129"/>
    </location>
</feature>
<comment type="similarity">
    <text evidence="1">Belongs to the UPF0225 family.</text>
</comment>
<evidence type="ECO:0000255" key="1">
    <source>
        <dbReference type="HAMAP-Rule" id="MF_00612"/>
    </source>
</evidence>
<organism>
    <name type="scientific">Xanthomonas campestris pv. campestris (strain ATCC 33913 / DSM 3586 / NCPPB 528 / LMG 568 / P 25)</name>
    <dbReference type="NCBI Taxonomy" id="190485"/>
    <lineage>
        <taxon>Bacteria</taxon>
        <taxon>Pseudomonadati</taxon>
        <taxon>Pseudomonadota</taxon>
        <taxon>Gammaproteobacteria</taxon>
        <taxon>Lysobacterales</taxon>
        <taxon>Lysobacteraceae</taxon>
        <taxon>Xanthomonas</taxon>
    </lineage>
</organism>
<gene>
    <name type="ordered locus">XCC4159</name>
</gene>
<dbReference type="EMBL" id="AE008922">
    <property type="protein sequence ID" value="AAM43375.1"/>
    <property type="molecule type" value="Genomic_DNA"/>
</dbReference>
<dbReference type="RefSeq" id="NP_639493.1">
    <property type="nucleotide sequence ID" value="NC_003902.1"/>
</dbReference>
<dbReference type="RefSeq" id="WP_011039223.1">
    <property type="nucleotide sequence ID" value="NC_003902.1"/>
</dbReference>
<dbReference type="SMR" id="Q8P3B7"/>
<dbReference type="STRING" id="190485.XCC4159"/>
<dbReference type="EnsemblBacteria" id="AAM43375">
    <property type="protein sequence ID" value="AAM43375"/>
    <property type="gene ID" value="XCC4159"/>
</dbReference>
<dbReference type="KEGG" id="xcc:XCC4159"/>
<dbReference type="PATRIC" id="fig|190485.4.peg.4453"/>
<dbReference type="eggNOG" id="COG3012">
    <property type="taxonomic scope" value="Bacteria"/>
</dbReference>
<dbReference type="HOGENOM" id="CLU_099590_2_0_6"/>
<dbReference type="OrthoDB" id="21421at2"/>
<dbReference type="Proteomes" id="UP000001010">
    <property type="component" value="Chromosome"/>
</dbReference>
<dbReference type="Gene3D" id="3.10.450.50">
    <property type="match status" value="1"/>
</dbReference>
<dbReference type="HAMAP" id="MF_00612">
    <property type="entry name" value="UPF0225"/>
    <property type="match status" value="1"/>
</dbReference>
<dbReference type="InterPro" id="IPR032710">
    <property type="entry name" value="NTF2-like_dom_sf"/>
</dbReference>
<dbReference type="InterPro" id="IPR004027">
    <property type="entry name" value="SEC_C_motif"/>
</dbReference>
<dbReference type="InterPro" id="IPR023006">
    <property type="entry name" value="UPF0225"/>
</dbReference>
<dbReference type="InterPro" id="IPR048469">
    <property type="entry name" value="YchJ-like_M"/>
</dbReference>
<dbReference type="NCBIfam" id="NF003262">
    <property type="entry name" value="PRK04233.1"/>
    <property type="match status" value="1"/>
</dbReference>
<dbReference type="PANTHER" id="PTHR33747:SF1">
    <property type="entry name" value="ADENYLATE CYCLASE-ASSOCIATED CAP C-TERMINAL DOMAIN-CONTAINING PROTEIN"/>
    <property type="match status" value="1"/>
</dbReference>
<dbReference type="PANTHER" id="PTHR33747">
    <property type="entry name" value="UPF0225 PROTEIN SCO1677"/>
    <property type="match status" value="1"/>
</dbReference>
<dbReference type="Pfam" id="PF02810">
    <property type="entry name" value="SEC-C"/>
    <property type="match status" value="1"/>
</dbReference>
<dbReference type="Pfam" id="PF17775">
    <property type="entry name" value="YchJ_M-like"/>
    <property type="match status" value="1"/>
</dbReference>
<dbReference type="SUPFAM" id="SSF54427">
    <property type="entry name" value="NTF2-like"/>
    <property type="match status" value="1"/>
</dbReference>
<reference key="1">
    <citation type="journal article" date="2002" name="Nature">
        <title>Comparison of the genomes of two Xanthomonas pathogens with differing host specificities.</title>
        <authorList>
            <person name="da Silva A.C.R."/>
            <person name="Ferro J.A."/>
            <person name="Reinach F.C."/>
            <person name="Farah C.S."/>
            <person name="Furlan L.R."/>
            <person name="Quaggio R.B."/>
            <person name="Monteiro-Vitorello C.B."/>
            <person name="Van Sluys M.A."/>
            <person name="Almeida N.F. Jr."/>
            <person name="Alves L.M.C."/>
            <person name="do Amaral A.M."/>
            <person name="Bertolini M.C."/>
            <person name="Camargo L.E.A."/>
            <person name="Camarotte G."/>
            <person name="Cannavan F."/>
            <person name="Cardozo J."/>
            <person name="Chambergo F."/>
            <person name="Ciapina L.P."/>
            <person name="Cicarelli R.M.B."/>
            <person name="Coutinho L.L."/>
            <person name="Cursino-Santos J.R."/>
            <person name="El-Dorry H."/>
            <person name="Faria J.B."/>
            <person name="Ferreira A.J.S."/>
            <person name="Ferreira R.C.C."/>
            <person name="Ferro M.I.T."/>
            <person name="Formighieri E.F."/>
            <person name="Franco M.C."/>
            <person name="Greggio C.C."/>
            <person name="Gruber A."/>
            <person name="Katsuyama A.M."/>
            <person name="Kishi L.T."/>
            <person name="Leite R.P."/>
            <person name="Lemos E.G.M."/>
            <person name="Lemos M.V.F."/>
            <person name="Locali E.C."/>
            <person name="Machado M.A."/>
            <person name="Madeira A.M.B.N."/>
            <person name="Martinez-Rossi N.M."/>
            <person name="Martins E.C."/>
            <person name="Meidanis J."/>
            <person name="Menck C.F.M."/>
            <person name="Miyaki C.Y."/>
            <person name="Moon D.H."/>
            <person name="Moreira L.M."/>
            <person name="Novo M.T.M."/>
            <person name="Okura V.K."/>
            <person name="Oliveira M.C."/>
            <person name="Oliveira V.R."/>
            <person name="Pereira H.A."/>
            <person name="Rossi A."/>
            <person name="Sena J.A.D."/>
            <person name="Silva C."/>
            <person name="de Souza R.F."/>
            <person name="Spinola L.A.F."/>
            <person name="Takita M.A."/>
            <person name="Tamura R.E."/>
            <person name="Teixeira E.C."/>
            <person name="Tezza R.I.D."/>
            <person name="Trindade dos Santos M."/>
            <person name="Truffi D."/>
            <person name="Tsai S.M."/>
            <person name="White F.F."/>
            <person name="Setubal J.C."/>
            <person name="Kitajima J.P."/>
        </authorList>
    </citation>
    <scope>NUCLEOTIDE SEQUENCE [LARGE SCALE GENOMIC DNA]</scope>
    <source>
        <strain>ATCC 33913 / DSM 3586 / NCPPB 528 / LMG 568 / P 25</strain>
    </source>
</reference>
<name>Y4159_XANCP</name>
<protein>
    <recommendedName>
        <fullName evidence="1">UPF0225 protein XCC4159</fullName>
    </recommendedName>
</protein>